<sequence>MPPPAKEGGRKGPRERSGKSAPGTAQGEERAKGAPATEPPKPGWALTPQGLAAMLPAQRHRHLLFGDLLEDVGAAASTFPCGSVEPGYRMPDPRPWTQSLELPAERQNRLLGVLKAAEARGRVRALRLRYTRMRAEEIALLIQRQKSARAAIRLELFLPPQLKPARIPDPLDRQERRRVETILEENVDGTIFPR</sequence>
<proteinExistence type="evidence at protein level"/>
<gene>
    <name type="primary">LKAAEAR1</name>
    <name type="synonym">C20orf201</name>
</gene>
<comment type="interaction">
    <interactant intactId="EBI-12159375">
        <id>Q8TD35-2</id>
    </interactant>
    <interactant intactId="EBI-3044087">
        <id>Q7Z3Y8</id>
        <label>KRT27</label>
    </interactant>
    <organismsDiffer>false</organismsDiffer>
    <experiments>3</experiments>
</comment>
<comment type="alternative products">
    <event type="alternative splicing"/>
    <isoform>
        <id>Q8TD35-1</id>
        <name>1</name>
        <sequence type="displayed"/>
    </isoform>
    <isoform>
        <id>Q8TD35-2</id>
        <name>2</name>
        <sequence type="described" ref="VSP_032961"/>
    </isoform>
</comment>
<accession>Q8TD35</accession>
<accession>Q8N419</accession>
<accession>Q8TD36</accession>
<evidence type="ECO:0000256" key="1">
    <source>
        <dbReference type="SAM" id="MobiDB-lite"/>
    </source>
</evidence>
<evidence type="ECO:0000269" key="2">
    <source>
    </source>
</evidence>
<evidence type="ECO:0000303" key="3">
    <source>
    </source>
</evidence>
<reference key="1">
    <citation type="journal article" date="2001" name="Nature">
        <title>The DNA sequence and comparative analysis of human chromosome 20.</title>
        <authorList>
            <person name="Deloukas P."/>
            <person name="Matthews L.H."/>
            <person name="Ashurst J.L."/>
            <person name="Burton J."/>
            <person name="Gilbert J.G.R."/>
            <person name="Jones M."/>
            <person name="Stavrides G."/>
            <person name="Almeida J.P."/>
            <person name="Babbage A.K."/>
            <person name="Bagguley C.L."/>
            <person name="Bailey J."/>
            <person name="Barlow K.F."/>
            <person name="Bates K.N."/>
            <person name="Beard L.M."/>
            <person name="Beare D.M."/>
            <person name="Beasley O.P."/>
            <person name="Bird C.P."/>
            <person name="Blakey S.E."/>
            <person name="Bridgeman A.M."/>
            <person name="Brown A.J."/>
            <person name="Buck D."/>
            <person name="Burrill W.D."/>
            <person name="Butler A.P."/>
            <person name="Carder C."/>
            <person name="Carter N.P."/>
            <person name="Chapman J.C."/>
            <person name="Clamp M."/>
            <person name="Clark G."/>
            <person name="Clark L.N."/>
            <person name="Clark S.Y."/>
            <person name="Clee C.M."/>
            <person name="Clegg S."/>
            <person name="Cobley V.E."/>
            <person name="Collier R.E."/>
            <person name="Connor R.E."/>
            <person name="Corby N.R."/>
            <person name="Coulson A."/>
            <person name="Coville G.J."/>
            <person name="Deadman R."/>
            <person name="Dhami P.D."/>
            <person name="Dunn M."/>
            <person name="Ellington A.G."/>
            <person name="Frankland J.A."/>
            <person name="Fraser A."/>
            <person name="French L."/>
            <person name="Garner P."/>
            <person name="Grafham D.V."/>
            <person name="Griffiths C."/>
            <person name="Griffiths M.N.D."/>
            <person name="Gwilliam R."/>
            <person name="Hall R.E."/>
            <person name="Hammond S."/>
            <person name="Harley J.L."/>
            <person name="Heath P.D."/>
            <person name="Ho S."/>
            <person name="Holden J.L."/>
            <person name="Howden P.J."/>
            <person name="Huckle E."/>
            <person name="Hunt A.R."/>
            <person name="Hunt S.E."/>
            <person name="Jekosch K."/>
            <person name="Johnson C.M."/>
            <person name="Johnson D."/>
            <person name="Kay M.P."/>
            <person name="Kimberley A.M."/>
            <person name="King A."/>
            <person name="Knights A."/>
            <person name="Laird G.K."/>
            <person name="Lawlor S."/>
            <person name="Lehvaeslaiho M.H."/>
            <person name="Leversha M.A."/>
            <person name="Lloyd C."/>
            <person name="Lloyd D.M."/>
            <person name="Lovell J.D."/>
            <person name="Marsh V.L."/>
            <person name="Martin S.L."/>
            <person name="McConnachie L.J."/>
            <person name="McLay K."/>
            <person name="McMurray A.A."/>
            <person name="Milne S.A."/>
            <person name="Mistry D."/>
            <person name="Moore M.J.F."/>
            <person name="Mullikin J.C."/>
            <person name="Nickerson T."/>
            <person name="Oliver K."/>
            <person name="Parker A."/>
            <person name="Patel R."/>
            <person name="Pearce T.A.V."/>
            <person name="Peck A.I."/>
            <person name="Phillimore B.J.C.T."/>
            <person name="Prathalingam S.R."/>
            <person name="Plumb R.W."/>
            <person name="Ramsay H."/>
            <person name="Rice C.M."/>
            <person name="Ross M.T."/>
            <person name="Scott C.E."/>
            <person name="Sehra H.K."/>
            <person name="Shownkeen R."/>
            <person name="Sims S."/>
            <person name="Skuce C.D."/>
            <person name="Smith M.L."/>
            <person name="Soderlund C."/>
            <person name="Steward C.A."/>
            <person name="Sulston J.E."/>
            <person name="Swann R.M."/>
            <person name="Sycamore N."/>
            <person name="Taylor R."/>
            <person name="Tee L."/>
            <person name="Thomas D.W."/>
            <person name="Thorpe A."/>
            <person name="Tracey A."/>
            <person name="Tromans A.C."/>
            <person name="Vaudin M."/>
            <person name="Wall M."/>
            <person name="Wallis J.M."/>
            <person name="Whitehead S.L."/>
            <person name="Whittaker P."/>
            <person name="Willey D.L."/>
            <person name="Williams L."/>
            <person name="Williams S.A."/>
            <person name="Wilming L."/>
            <person name="Wray P.W."/>
            <person name="Hubbard T."/>
            <person name="Durbin R.M."/>
            <person name="Bentley D.R."/>
            <person name="Beck S."/>
            <person name="Rogers J."/>
        </authorList>
    </citation>
    <scope>NUCLEOTIDE SEQUENCE [LARGE SCALE GENOMIC DNA]</scope>
</reference>
<reference key="2">
    <citation type="submission" date="2005-09" db="EMBL/GenBank/DDBJ databases">
        <authorList>
            <person name="Mural R.J."/>
            <person name="Istrail S."/>
            <person name="Sutton G.G."/>
            <person name="Florea L."/>
            <person name="Halpern A.L."/>
            <person name="Mobarry C.M."/>
            <person name="Lippert R."/>
            <person name="Walenz B."/>
            <person name="Shatkay H."/>
            <person name="Dew I."/>
            <person name="Miller J.R."/>
            <person name="Flanigan M.J."/>
            <person name="Edwards N.J."/>
            <person name="Bolanos R."/>
            <person name="Fasulo D."/>
            <person name="Halldorsson B.V."/>
            <person name="Hannenhalli S."/>
            <person name="Turner R."/>
            <person name="Yooseph S."/>
            <person name="Lu F."/>
            <person name="Nusskern D.R."/>
            <person name="Shue B.C."/>
            <person name="Zheng X.H."/>
            <person name="Zhong F."/>
            <person name="Delcher A.L."/>
            <person name="Huson D.H."/>
            <person name="Kravitz S.A."/>
            <person name="Mouchard L."/>
            <person name="Reinert K."/>
            <person name="Remington K.A."/>
            <person name="Clark A.G."/>
            <person name="Waterman M.S."/>
            <person name="Eichler E.E."/>
            <person name="Adams M.D."/>
            <person name="Hunkapiller M.W."/>
            <person name="Myers E.W."/>
            <person name="Venter J.C."/>
        </authorList>
    </citation>
    <scope>NUCLEOTIDE SEQUENCE [LARGE SCALE GENOMIC DNA]</scope>
</reference>
<reference key="3">
    <citation type="journal article" date="2004" name="Genome Res.">
        <title>The status, quality, and expansion of the NIH full-length cDNA project: the Mammalian Gene Collection (MGC).</title>
        <authorList>
            <consortium name="The MGC Project Team"/>
        </authorList>
    </citation>
    <scope>NUCLEOTIDE SEQUENCE [LARGE SCALE MRNA] (ISOFORM 2)</scope>
    <source>
        <tissue>Brain</tissue>
    </source>
</reference>
<reference key="4">
    <citation type="journal article" date="2016" name="Hum. Mol. Genet.">
        <title>Homozygous mutation of PLCZ1 leads to defective human oocyte activation and infertility that is not rescued by the WW-binding protein PAWP.</title>
        <authorList>
            <person name="Escoffier J."/>
            <person name="Lee H.C."/>
            <person name="Yassine S."/>
            <person name="Zouari R."/>
            <person name="Martinez G."/>
            <person name="Karaouzene T."/>
            <person name="Coutton C."/>
            <person name="Kherraf Z.E."/>
            <person name="Halouani L."/>
            <person name="Triki C."/>
            <person name="Nef S."/>
            <person name="Thierry-Mieg N."/>
            <person name="Savinov S.N."/>
            <person name="Fissore R."/>
            <person name="Ray P.F."/>
            <person name="Arnoult C."/>
        </authorList>
    </citation>
    <scope>VARIANT ASP-85</scope>
</reference>
<feature type="chain" id="PRO_0000329279" description="Protein LKAAEAR1">
    <location>
        <begin position="1"/>
        <end position="194"/>
    </location>
</feature>
<feature type="region of interest" description="Disordered" evidence="1">
    <location>
        <begin position="1"/>
        <end position="45"/>
    </location>
</feature>
<feature type="compositionally biased region" description="Basic and acidic residues" evidence="1">
    <location>
        <begin position="7"/>
        <end position="18"/>
    </location>
</feature>
<feature type="splice variant" id="VSP_032961" description="In isoform 2." evidence="3">
    <original>RRRVETILEENVDGTIFPR</original>
    <variation>VQTSPGRGGERGGALPASAHAGPQPLSPAAEARGDHPGGERGWHHLPAVTATESVRRAPASHIKL</variation>
    <location>
        <begin position="176"/>
        <end position="194"/>
    </location>
</feature>
<feature type="sequence variant" id="VAR_042651" description="In dbSNP:rs4431000.">
    <original>G</original>
    <variation>W</variation>
    <location>
        <position position="9"/>
    </location>
</feature>
<feature type="sequence variant" id="VAR_077877" description="In dbSNP:rs77021907." evidence="2">
    <original>E</original>
    <variation>D</variation>
    <location>
        <position position="85"/>
    </location>
</feature>
<name>LKAM1_HUMAN</name>
<organism>
    <name type="scientific">Homo sapiens</name>
    <name type="common">Human</name>
    <dbReference type="NCBI Taxonomy" id="9606"/>
    <lineage>
        <taxon>Eukaryota</taxon>
        <taxon>Metazoa</taxon>
        <taxon>Chordata</taxon>
        <taxon>Craniata</taxon>
        <taxon>Vertebrata</taxon>
        <taxon>Euteleostomi</taxon>
        <taxon>Mammalia</taxon>
        <taxon>Eutheria</taxon>
        <taxon>Euarchontoglires</taxon>
        <taxon>Primates</taxon>
        <taxon>Haplorrhini</taxon>
        <taxon>Catarrhini</taxon>
        <taxon>Hominidae</taxon>
        <taxon>Homo</taxon>
    </lineage>
</organism>
<protein>
    <recommendedName>
        <fullName>Protein LKAAEAR1</fullName>
    </recommendedName>
    <alternativeName>
        <fullName>LKAAEAR motif-containing protein 1</fullName>
    </alternativeName>
</protein>
<dbReference type="EMBL" id="AL590548">
    <property type="status" value="NOT_ANNOTATED_CDS"/>
    <property type="molecule type" value="Genomic_DNA"/>
</dbReference>
<dbReference type="EMBL" id="CH471077">
    <property type="protein sequence ID" value="EAW75164.1"/>
    <property type="molecule type" value="Genomic_DNA"/>
</dbReference>
<dbReference type="EMBL" id="BC036837">
    <property type="protein sequence ID" value="AAH36837.1"/>
    <property type="molecule type" value="mRNA"/>
</dbReference>
<dbReference type="CCDS" id="CCDS33509.1">
    <molecule id="Q8TD35-2"/>
</dbReference>
<dbReference type="CCDS" id="CCDS86972.1">
    <molecule id="Q8TD35-1"/>
</dbReference>
<dbReference type="RefSeq" id="NP_001007126.1">
    <molecule id="Q8TD35-2"/>
    <property type="nucleotide sequence ID" value="NM_001007125.3"/>
</dbReference>
<dbReference type="RefSeq" id="NP_001340354.1">
    <molecule id="Q8TD35-1"/>
    <property type="nucleotide sequence ID" value="NM_001353425.2"/>
</dbReference>
<dbReference type="RefSeq" id="NP_001373900.1">
    <molecule id="Q8TD35-1"/>
    <property type="nucleotide sequence ID" value="NM_001386971.1"/>
</dbReference>
<dbReference type="RefSeq" id="XP_005260257.3">
    <property type="nucleotide sequence ID" value="XM_005260200.3"/>
</dbReference>
<dbReference type="RefSeq" id="XP_024307617.1">
    <molecule id="Q8TD35-2"/>
    <property type="nucleotide sequence ID" value="XM_024451849.2"/>
</dbReference>
<dbReference type="RefSeq" id="XP_024307618.1">
    <molecule id="Q8TD35-2"/>
    <property type="nucleotide sequence ID" value="XM_024451850.2"/>
</dbReference>
<dbReference type="RefSeq" id="XP_047295919.1">
    <molecule id="Q8TD35-1"/>
    <property type="nucleotide sequence ID" value="XM_047439963.1"/>
</dbReference>
<dbReference type="SMR" id="Q8TD35"/>
<dbReference type="BioGRID" id="128258">
    <property type="interactions" value="1"/>
</dbReference>
<dbReference type="FunCoup" id="Q8TD35">
    <property type="interactions" value="1"/>
</dbReference>
<dbReference type="IntAct" id="Q8TD35">
    <property type="interactions" value="1"/>
</dbReference>
<dbReference type="STRING" id="9606.ENSP00000310801"/>
<dbReference type="iPTMnet" id="Q8TD35"/>
<dbReference type="PhosphoSitePlus" id="Q8TD35"/>
<dbReference type="BioMuta" id="LKAAEAR1"/>
<dbReference type="DMDM" id="182705223"/>
<dbReference type="MassIVE" id="Q8TD35"/>
<dbReference type="PaxDb" id="9606-ENSP00000310801"/>
<dbReference type="PeptideAtlas" id="Q8TD35"/>
<dbReference type="ProteomicsDB" id="74231">
    <molecule id="Q8TD35-1"/>
</dbReference>
<dbReference type="ProteomicsDB" id="74232">
    <molecule id="Q8TD35-2"/>
</dbReference>
<dbReference type="Antibodypedia" id="44636">
    <property type="antibodies" value="66 antibodies from 11 providers"/>
</dbReference>
<dbReference type="DNASU" id="198437"/>
<dbReference type="Ensembl" id="ENST00000302096.5">
    <molecule id="Q8TD35-1"/>
    <property type="protein sequence ID" value="ENSP00000302763.4"/>
    <property type="gene ID" value="ENSG00000171695.11"/>
</dbReference>
<dbReference type="Ensembl" id="ENST00000308906.6">
    <molecule id="Q8TD35-2"/>
    <property type="protein sequence ID" value="ENSP00000310801.2"/>
    <property type="gene ID" value="ENSG00000171695.11"/>
</dbReference>
<dbReference type="GeneID" id="198437"/>
<dbReference type="KEGG" id="hsa:198437"/>
<dbReference type="MANE-Select" id="ENST00000302096.5">
    <property type="protein sequence ID" value="ENSP00000302763.4"/>
    <property type="RefSeq nucleotide sequence ID" value="NM_001353425.2"/>
    <property type="RefSeq protein sequence ID" value="NP_001340354.1"/>
</dbReference>
<dbReference type="UCSC" id="uc002yie.1">
    <molecule id="Q8TD35-1"/>
    <property type="organism name" value="human"/>
</dbReference>
<dbReference type="AGR" id="HGNC:33718"/>
<dbReference type="CTD" id="198437"/>
<dbReference type="GeneCards" id="LKAAEAR1"/>
<dbReference type="HGNC" id="HGNC:33718">
    <property type="gene designation" value="LKAAEAR1"/>
</dbReference>
<dbReference type="HPA" id="ENSG00000171695">
    <property type="expression patterns" value="Tissue enriched (testis)"/>
</dbReference>
<dbReference type="neXtProt" id="NX_Q8TD35"/>
<dbReference type="OpenTargets" id="ENSG00000171695"/>
<dbReference type="PharmGKB" id="PA162378956"/>
<dbReference type="VEuPathDB" id="HostDB:ENSG00000171695"/>
<dbReference type="eggNOG" id="ENOG502S5XG">
    <property type="taxonomic scope" value="Eukaryota"/>
</dbReference>
<dbReference type="GeneTree" id="ENSGT00390000009883"/>
<dbReference type="HOGENOM" id="CLU_092463_1_0_1"/>
<dbReference type="InParanoid" id="Q8TD35"/>
<dbReference type="OMA" id="PAQCHRH"/>
<dbReference type="OrthoDB" id="10045727at2759"/>
<dbReference type="PAN-GO" id="Q8TD35">
    <property type="GO annotations" value="0 GO annotations based on evolutionary models"/>
</dbReference>
<dbReference type="PhylomeDB" id="Q8TD35"/>
<dbReference type="TreeFam" id="TF337699"/>
<dbReference type="PathwayCommons" id="Q8TD35"/>
<dbReference type="SignaLink" id="Q8TD35"/>
<dbReference type="BioGRID-ORCS" id="198437">
    <property type="hits" value="15 hits in 1113 CRISPR screens"/>
</dbReference>
<dbReference type="GenomeRNAi" id="198437"/>
<dbReference type="Pharos" id="Q8TD35">
    <property type="development level" value="Tdark"/>
</dbReference>
<dbReference type="PRO" id="PR:Q8TD35"/>
<dbReference type="Proteomes" id="UP000005640">
    <property type="component" value="Chromosome 20"/>
</dbReference>
<dbReference type="RNAct" id="Q8TD35">
    <property type="molecule type" value="protein"/>
</dbReference>
<dbReference type="Bgee" id="ENSG00000171695">
    <property type="expression patterns" value="Expressed in right testis and 84 other cell types or tissues"/>
</dbReference>
<dbReference type="InterPro" id="IPR029152">
    <property type="entry name" value="LKAAEAR1"/>
</dbReference>
<dbReference type="PANTHER" id="PTHR35665">
    <property type="entry name" value="PROTEIN LKAAEAR1"/>
    <property type="match status" value="1"/>
</dbReference>
<dbReference type="PANTHER" id="PTHR35665:SF1">
    <property type="entry name" value="PROTEIN LKAAEAR1"/>
    <property type="match status" value="1"/>
</dbReference>
<dbReference type="Pfam" id="PF15478">
    <property type="entry name" value="LKAAEAR"/>
    <property type="match status" value="1"/>
</dbReference>
<keyword id="KW-0025">Alternative splicing</keyword>
<keyword id="KW-1267">Proteomics identification</keyword>
<keyword id="KW-1185">Reference proteome</keyword>